<dbReference type="EMBL" id="D32210">
    <property type="protein sequence ID" value="BAA22094.1"/>
    <property type="status" value="ALT_FRAME"/>
    <property type="molecule type" value="mRNA"/>
</dbReference>
<dbReference type="EMBL" id="AC154173">
    <property type="status" value="NOT_ANNOTATED_CDS"/>
    <property type="molecule type" value="Genomic_DNA"/>
</dbReference>
<dbReference type="EMBL" id="AC164091">
    <property type="status" value="NOT_ANNOTATED_CDS"/>
    <property type="molecule type" value="Genomic_DNA"/>
</dbReference>
<dbReference type="EMBL" id="CH466620">
    <property type="protein sequence ID" value="EDL38950.1"/>
    <property type="molecule type" value="Genomic_DNA"/>
</dbReference>
<dbReference type="EMBL" id="X68279">
    <property type="protein sequence ID" value="CAA48340.1"/>
    <property type="molecule type" value="mRNA"/>
</dbReference>
<dbReference type="EMBL" id="U31881">
    <property type="protein sequence ID" value="AAC52924.1"/>
    <property type="molecule type" value="mRNA"/>
</dbReference>
<dbReference type="CCDS" id="CCDS51013.1">
    <molecule id="O35516-1"/>
</dbReference>
<dbReference type="PIR" id="A49175">
    <property type="entry name" value="A49175"/>
</dbReference>
<dbReference type="RefSeq" id="NP_035058.2">
    <molecule id="O35516-1"/>
    <property type="nucleotide sequence ID" value="NM_010928.2"/>
</dbReference>
<dbReference type="SMR" id="O35516"/>
<dbReference type="BioGRID" id="201809">
    <property type="interactions" value="18"/>
</dbReference>
<dbReference type="CORUM" id="O35516"/>
<dbReference type="DIP" id="DIP-6008N"/>
<dbReference type="FunCoup" id="O35516">
    <property type="interactions" value="916"/>
</dbReference>
<dbReference type="IntAct" id="O35516">
    <property type="interactions" value="2"/>
</dbReference>
<dbReference type="STRING" id="10090.ENSMUSP00000078741"/>
<dbReference type="GlyCosmos" id="O35516">
    <property type="glycosylation" value="6 sites, No reported glycans"/>
</dbReference>
<dbReference type="GlyGen" id="O35516">
    <property type="glycosylation" value="10 sites, 2 N-linked glycans (2 sites), 1 O-linked glycan (1 site)"/>
</dbReference>
<dbReference type="iPTMnet" id="O35516"/>
<dbReference type="PhosphoSitePlus" id="O35516"/>
<dbReference type="SwissPalm" id="O35516"/>
<dbReference type="CPTAC" id="non-CPTAC-3851"/>
<dbReference type="jPOST" id="O35516"/>
<dbReference type="PaxDb" id="10090-ENSMUSP00000078741"/>
<dbReference type="PeptideAtlas" id="O35516"/>
<dbReference type="ProteomicsDB" id="252844">
    <molecule id="O35516-1"/>
</dbReference>
<dbReference type="ProteomicsDB" id="252845">
    <molecule id="O35516-2"/>
</dbReference>
<dbReference type="ProteomicsDB" id="336721"/>
<dbReference type="Pumba" id="O35516"/>
<dbReference type="ABCD" id="O35516">
    <property type="antibodies" value="4 sequenced antibodies"/>
</dbReference>
<dbReference type="Antibodypedia" id="20208">
    <property type="antibodies" value="665 antibodies from 45 providers"/>
</dbReference>
<dbReference type="DNASU" id="18129"/>
<dbReference type="Ensembl" id="ENSMUST00000079812.8">
    <molecule id="O35516-1"/>
    <property type="protein sequence ID" value="ENSMUSP00000078741.7"/>
    <property type="gene ID" value="ENSMUSG00000027878.12"/>
</dbReference>
<dbReference type="GeneID" id="18129"/>
<dbReference type="KEGG" id="mmu:18129"/>
<dbReference type="UCSC" id="uc008qpo.1">
    <property type="organism name" value="mouse"/>
</dbReference>
<dbReference type="AGR" id="MGI:97364"/>
<dbReference type="CTD" id="4853"/>
<dbReference type="MGI" id="MGI:97364">
    <property type="gene designation" value="Notch2"/>
</dbReference>
<dbReference type="VEuPathDB" id="HostDB:ENSMUSG00000027878"/>
<dbReference type="eggNOG" id="KOG1217">
    <property type="taxonomic scope" value="Eukaryota"/>
</dbReference>
<dbReference type="GeneTree" id="ENSGT00940000155030"/>
<dbReference type="HOGENOM" id="CLU_000576_0_0_1"/>
<dbReference type="InParanoid" id="O35516"/>
<dbReference type="OMA" id="AHMSEPP"/>
<dbReference type="OrthoDB" id="283575at2759"/>
<dbReference type="PhylomeDB" id="O35516"/>
<dbReference type="TreeFam" id="TF351641"/>
<dbReference type="BioGRID-ORCS" id="18129">
    <property type="hits" value="7 hits in 83 CRISPR screens"/>
</dbReference>
<dbReference type="ChiTaRS" id="Notch2">
    <property type="organism name" value="mouse"/>
</dbReference>
<dbReference type="PRO" id="PR:O35516"/>
<dbReference type="Proteomes" id="UP000000589">
    <property type="component" value="Chromosome 3"/>
</dbReference>
<dbReference type="RNAct" id="O35516">
    <property type="molecule type" value="protein"/>
</dbReference>
<dbReference type="Bgee" id="ENSMUSG00000027878">
    <property type="expression patterns" value="Expressed in ciliary body and 327 other cell types or tissues"/>
</dbReference>
<dbReference type="GO" id="GO:0009986">
    <property type="term" value="C:cell surface"/>
    <property type="evidence" value="ECO:0000250"/>
    <property type="project" value="UniProtKB"/>
</dbReference>
<dbReference type="GO" id="GO:0005929">
    <property type="term" value="C:cilium"/>
    <property type="evidence" value="ECO:0000314"/>
    <property type="project" value="MGI"/>
</dbReference>
<dbReference type="GO" id="GO:0005829">
    <property type="term" value="C:cytosol"/>
    <property type="evidence" value="ECO:0000304"/>
    <property type="project" value="Reactome"/>
</dbReference>
<dbReference type="GO" id="GO:0005576">
    <property type="term" value="C:extracellular region"/>
    <property type="evidence" value="ECO:0000304"/>
    <property type="project" value="Reactome"/>
</dbReference>
<dbReference type="GO" id="GO:0005794">
    <property type="term" value="C:Golgi apparatus"/>
    <property type="evidence" value="ECO:0007669"/>
    <property type="project" value="Ensembl"/>
</dbReference>
<dbReference type="GO" id="GO:0005654">
    <property type="term" value="C:nucleoplasm"/>
    <property type="evidence" value="ECO:0000304"/>
    <property type="project" value="Reactome"/>
</dbReference>
<dbReference type="GO" id="GO:0005634">
    <property type="term" value="C:nucleus"/>
    <property type="evidence" value="ECO:0000314"/>
    <property type="project" value="UniProtKB"/>
</dbReference>
<dbReference type="GO" id="GO:0005886">
    <property type="term" value="C:plasma membrane"/>
    <property type="evidence" value="ECO:0000314"/>
    <property type="project" value="MGI"/>
</dbReference>
<dbReference type="GO" id="GO:0043235">
    <property type="term" value="C:receptor complex"/>
    <property type="evidence" value="ECO:0000266"/>
    <property type="project" value="MGI"/>
</dbReference>
<dbReference type="GO" id="GO:0005509">
    <property type="term" value="F:calcium ion binding"/>
    <property type="evidence" value="ECO:0007669"/>
    <property type="project" value="InterPro"/>
</dbReference>
<dbReference type="GO" id="GO:0000987">
    <property type="term" value="F:cis-regulatory region sequence-specific DNA binding"/>
    <property type="evidence" value="ECO:0007669"/>
    <property type="project" value="Ensembl"/>
</dbReference>
<dbReference type="GO" id="GO:0001228">
    <property type="term" value="F:DNA-binding transcription activator activity, RNA polymerase II-specific"/>
    <property type="evidence" value="ECO:0007669"/>
    <property type="project" value="Ensembl"/>
</dbReference>
<dbReference type="GO" id="GO:0019899">
    <property type="term" value="F:enzyme binding"/>
    <property type="evidence" value="ECO:0000353"/>
    <property type="project" value="UniProtKB"/>
</dbReference>
<dbReference type="GO" id="GO:0051059">
    <property type="term" value="F:NF-kappaB binding"/>
    <property type="evidence" value="ECO:0000353"/>
    <property type="project" value="UniProtKB"/>
</dbReference>
<dbReference type="GO" id="GO:0038023">
    <property type="term" value="F:signaling receptor activity"/>
    <property type="evidence" value="ECO:0007669"/>
    <property type="project" value="InterPro"/>
</dbReference>
<dbReference type="GO" id="GO:0009887">
    <property type="term" value="P:animal organ morphogenesis"/>
    <property type="evidence" value="ECO:0000304"/>
    <property type="project" value="UniProtKB"/>
</dbReference>
<dbReference type="GO" id="GO:0006915">
    <property type="term" value="P:apoptotic process"/>
    <property type="evidence" value="ECO:0007669"/>
    <property type="project" value="InterPro"/>
</dbReference>
<dbReference type="GO" id="GO:0060413">
    <property type="term" value="P:atrial septum morphogenesis"/>
    <property type="evidence" value="ECO:0000250"/>
    <property type="project" value="BHF-UCL"/>
</dbReference>
<dbReference type="GO" id="GO:0030509">
    <property type="term" value="P:BMP signaling pathway"/>
    <property type="evidence" value="ECO:0000315"/>
    <property type="project" value="MGI"/>
</dbReference>
<dbReference type="GO" id="GO:0046849">
    <property type="term" value="P:bone remodeling"/>
    <property type="evidence" value="ECO:0007669"/>
    <property type="project" value="Ensembl"/>
</dbReference>
<dbReference type="GO" id="GO:0001709">
    <property type="term" value="P:cell fate determination"/>
    <property type="evidence" value="ECO:0000304"/>
    <property type="project" value="UniProtKB"/>
</dbReference>
<dbReference type="GO" id="GO:0008283">
    <property type="term" value="P:cell population proliferation"/>
    <property type="evidence" value="ECO:0000315"/>
    <property type="project" value="MGI"/>
</dbReference>
<dbReference type="GO" id="GO:0071228">
    <property type="term" value="P:cellular response to tumor cell"/>
    <property type="evidence" value="ECO:0000250"/>
    <property type="project" value="UniProtKB"/>
</dbReference>
<dbReference type="GO" id="GO:1990705">
    <property type="term" value="P:cholangiocyte proliferation"/>
    <property type="evidence" value="ECO:0000315"/>
    <property type="project" value="MGI"/>
</dbReference>
<dbReference type="GO" id="GO:0061073">
    <property type="term" value="P:ciliary body morphogenesis"/>
    <property type="evidence" value="ECO:0000315"/>
    <property type="project" value="MGI"/>
</dbReference>
<dbReference type="GO" id="GO:0042742">
    <property type="term" value="P:defense response to bacterium"/>
    <property type="evidence" value="ECO:0000315"/>
    <property type="project" value="MGI"/>
</dbReference>
<dbReference type="GO" id="GO:0007368">
    <property type="term" value="P:determination of left/right symmetry"/>
    <property type="evidence" value="ECO:0000315"/>
    <property type="project" value="MGI"/>
</dbReference>
<dbReference type="GO" id="GO:0030326">
    <property type="term" value="P:embryonic limb morphogenesis"/>
    <property type="evidence" value="ECO:0000316"/>
    <property type="project" value="MGI"/>
</dbReference>
<dbReference type="GO" id="GO:0072104">
    <property type="term" value="P:glomerular capillary formation"/>
    <property type="evidence" value="ECO:0000270"/>
    <property type="project" value="UniProtKB"/>
</dbReference>
<dbReference type="GO" id="GO:0001947">
    <property type="term" value="P:heart looping"/>
    <property type="evidence" value="ECO:0000316"/>
    <property type="project" value="BHF-UCL"/>
</dbReference>
<dbReference type="GO" id="GO:0072574">
    <property type="term" value="P:hepatocyte proliferation"/>
    <property type="evidence" value="ECO:0000315"/>
    <property type="project" value="MGI"/>
</dbReference>
<dbReference type="GO" id="GO:0006959">
    <property type="term" value="P:humoral immune response"/>
    <property type="evidence" value="ECO:0000316"/>
    <property type="project" value="MGI"/>
</dbReference>
<dbReference type="GO" id="GO:0001701">
    <property type="term" value="P:in utero embryonic development"/>
    <property type="evidence" value="ECO:0000315"/>
    <property type="project" value="MGI"/>
</dbReference>
<dbReference type="GO" id="GO:0002437">
    <property type="term" value="P:inflammatory response to antigenic stimulus"/>
    <property type="evidence" value="ECO:0000316"/>
    <property type="project" value="MGI"/>
</dbReference>
<dbReference type="GO" id="GO:0035556">
    <property type="term" value="P:intracellular signal transduction"/>
    <property type="evidence" value="ECO:0000250"/>
    <property type="project" value="UniProtKB"/>
</dbReference>
<dbReference type="GO" id="GO:0035622">
    <property type="term" value="P:intrahepatic bile duct development"/>
    <property type="evidence" value="ECO:0000315"/>
    <property type="project" value="MGI"/>
</dbReference>
<dbReference type="GO" id="GO:0070986">
    <property type="term" value="P:left/right axis specification"/>
    <property type="evidence" value="ECO:0000316"/>
    <property type="project" value="BHF-UCL"/>
</dbReference>
<dbReference type="GO" id="GO:0001889">
    <property type="term" value="P:liver development"/>
    <property type="evidence" value="ECO:0000315"/>
    <property type="project" value="MGI"/>
</dbReference>
<dbReference type="GO" id="GO:0072576">
    <property type="term" value="P:liver morphogenesis"/>
    <property type="evidence" value="ECO:0000315"/>
    <property type="project" value="MGI"/>
</dbReference>
<dbReference type="GO" id="GO:0002315">
    <property type="term" value="P:marginal zone B cell differentiation"/>
    <property type="evidence" value="ECO:0000315"/>
    <property type="project" value="UniProtKB"/>
</dbReference>
<dbReference type="GO" id="GO:0002011">
    <property type="term" value="P:morphogenesis of an epithelial sheet"/>
    <property type="evidence" value="ECO:0000315"/>
    <property type="project" value="MGI"/>
</dbReference>
<dbReference type="GO" id="GO:0035264">
    <property type="term" value="P:multicellular organism growth"/>
    <property type="evidence" value="ECO:0000315"/>
    <property type="project" value="MGI"/>
</dbReference>
<dbReference type="GO" id="GO:0043011">
    <property type="term" value="P:myeloid dendritic cell differentiation"/>
    <property type="evidence" value="ECO:0000315"/>
    <property type="project" value="MGI"/>
</dbReference>
<dbReference type="GO" id="GO:0010629">
    <property type="term" value="P:negative regulation of gene expression"/>
    <property type="evidence" value="ECO:0007669"/>
    <property type="project" value="Ensembl"/>
</dbReference>
<dbReference type="GO" id="GO:0000122">
    <property type="term" value="P:negative regulation of transcription by RNA polymerase II"/>
    <property type="evidence" value="ECO:0000315"/>
    <property type="project" value="MGI"/>
</dbReference>
<dbReference type="GO" id="GO:0007219">
    <property type="term" value="P:Notch signaling pathway"/>
    <property type="evidence" value="ECO:0000314"/>
    <property type="project" value="MGI"/>
</dbReference>
<dbReference type="GO" id="GO:0060674">
    <property type="term" value="P:placenta blood vessel development"/>
    <property type="evidence" value="ECO:0000315"/>
    <property type="project" value="MGI"/>
</dbReference>
<dbReference type="GO" id="GO:0001890">
    <property type="term" value="P:placenta development"/>
    <property type="evidence" value="ECO:0000315"/>
    <property type="project" value="MGI"/>
</dbReference>
<dbReference type="GO" id="GO:0072015">
    <property type="term" value="P:podocyte development"/>
    <property type="evidence" value="ECO:0000270"/>
    <property type="project" value="UniProtKB"/>
</dbReference>
<dbReference type="GO" id="GO:0043065">
    <property type="term" value="P:positive regulation of apoptotic process"/>
    <property type="evidence" value="ECO:0000316"/>
    <property type="project" value="MGI"/>
</dbReference>
<dbReference type="GO" id="GO:0030513">
    <property type="term" value="P:positive regulation of BMP signaling pathway"/>
    <property type="evidence" value="ECO:0000315"/>
    <property type="project" value="MGI"/>
</dbReference>
<dbReference type="GO" id="GO:0008284">
    <property type="term" value="P:positive regulation of cell population proliferation"/>
    <property type="evidence" value="ECO:0000315"/>
    <property type="project" value="MGI"/>
</dbReference>
<dbReference type="GO" id="GO:0070374">
    <property type="term" value="P:positive regulation of ERK1 and ERK2 cascade"/>
    <property type="evidence" value="ECO:0007669"/>
    <property type="project" value="Ensembl"/>
</dbReference>
<dbReference type="GO" id="GO:0010838">
    <property type="term" value="P:positive regulation of keratinocyte proliferation"/>
    <property type="evidence" value="ECO:0000250"/>
    <property type="project" value="UniProtKB"/>
</dbReference>
<dbReference type="GO" id="GO:1902895">
    <property type="term" value="P:positive regulation of miRNA transcription"/>
    <property type="evidence" value="ECO:0007669"/>
    <property type="project" value="Ensembl"/>
</dbReference>
<dbReference type="GO" id="GO:0045672">
    <property type="term" value="P:positive regulation of osteoclast differentiation"/>
    <property type="evidence" value="ECO:0000314"/>
    <property type="project" value="UniProtKB"/>
</dbReference>
<dbReference type="GO" id="GO:0046579">
    <property type="term" value="P:positive regulation of Ras protein signal transduction"/>
    <property type="evidence" value="ECO:0000250"/>
    <property type="project" value="UniProtKB"/>
</dbReference>
<dbReference type="GO" id="GO:0051152">
    <property type="term" value="P:positive regulation of smooth muscle cell differentiation"/>
    <property type="evidence" value="ECO:0007669"/>
    <property type="project" value="Ensembl"/>
</dbReference>
<dbReference type="GO" id="GO:0072014">
    <property type="term" value="P:proximal tubule development"/>
    <property type="evidence" value="ECO:0000270"/>
    <property type="project" value="UniProtKB"/>
</dbReference>
<dbReference type="GO" id="GO:0003184">
    <property type="term" value="P:pulmonary valve morphogenesis"/>
    <property type="evidence" value="ECO:0000250"/>
    <property type="project" value="BHF-UCL"/>
</dbReference>
<dbReference type="GO" id="GO:2001204">
    <property type="term" value="P:regulation of osteoclast development"/>
    <property type="evidence" value="ECO:0000250"/>
    <property type="project" value="UniProtKB"/>
</dbReference>
<dbReference type="GO" id="GO:0006357">
    <property type="term" value="P:regulation of transcription by RNA polymerase II"/>
    <property type="evidence" value="ECO:0000315"/>
    <property type="project" value="MGI"/>
</dbReference>
<dbReference type="GO" id="GO:0042060">
    <property type="term" value="P:wound healing"/>
    <property type="evidence" value="ECO:0000314"/>
    <property type="project" value="UniProtKB"/>
</dbReference>
<dbReference type="CDD" id="cd00054">
    <property type="entry name" value="EGF_CA"/>
    <property type="match status" value="28"/>
</dbReference>
<dbReference type="CDD" id="cd21703">
    <property type="entry name" value="JMTM_Notch2"/>
    <property type="match status" value="1"/>
</dbReference>
<dbReference type="FunFam" id="2.10.25.10:FF:000123">
    <property type="entry name" value="Crumbs homolog 1 (Drosophila)"/>
    <property type="match status" value="1"/>
</dbReference>
<dbReference type="FunFam" id="2.10.25.10:FF:000151">
    <property type="entry name" value="FAT atypical cadherin 4"/>
    <property type="match status" value="1"/>
</dbReference>
<dbReference type="FunFam" id="1.25.40.20:FF:000005">
    <property type="entry name" value="Neurogenic locus notch 1"/>
    <property type="match status" value="1"/>
</dbReference>
<dbReference type="FunFam" id="2.10.25.10:FF:000004">
    <property type="entry name" value="Neurogenic locus notch 1"/>
    <property type="match status" value="8"/>
</dbReference>
<dbReference type="FunFam" id="2.10.25.10:FF:000080">
    <property type="entry name" value="Neurogenic locus notch 1"/>
    <property type="match status" value="2"/>
</dbReference>
<dbReference type="FunFam" id="2.10.25.10:FF:000136">
    <property type="entry name" value="Neurogenic locus notch 1"/>
    <property type="match status" value="1"/>
</dbReference>
<dbReference type="FunFam" id="2.10.25.10:FF:000279">
    <property type="entry name" value="Neurogenic locus notch 1"/>
    <property type="match status" value="1"/>
</dbReference>
<dbReference type="FunFam" id="3.30.300.320:FF:000001">
    <property type="entry name" value="Neurogenic locus notch 1"/>
    <property type="match status" value="1"/>
</dbReference>
<dbReference type="FunFam" id="2.10.25.10:FF:000558">
    <property type="entry name" value="Neurogenic locus notch homolog protein 1"/>
    <property type="match status" value="1"/>
</dbReference>
<dbReference type="FunFam" id="2.10.25.10:FF:000393">
    <property type="entry name" value="Neurogenic locus notch homolog protein 2"/>
    <property type="match status" value="1"/>
</dbReference>
<dbReference type="FunFam" id="2.10.25.10:FF:000423">
    <property type="entry name" value="Neurogenic locus notch homolog protein 2"/>
    <property type="match status" value="1"/>
</dbReference>
<dbReference type="FunFam" id="2.10.25.10:FF:000392">
    <property type="entry name" value="neurogenic locus notch homolog protein 2"/>
    <property type="match status" value="1"/>
</dbReference>
<dbReference type="FunFam" id="2.10.25.10:FF:000060">
    <property type="entry name" value="Neurogenic locus notch protein 1"/>
    <property type="match status" value="1"/>
</dbReference>
<dbReference type="FunFam" id="2.10.25.10:FF:000092">
    <property type="entry name" value="Neurogenic locus notch protein 1"/>
    <property type="match status" value="1"/>
</dbReference>
<dbReference type="FunFam" id="2.10.25.10:FF:000127">
    <property type="entry name" value="Neurogenic locus notch protein 1"/>
    <property type="match status" value="2"/>
</dbReference>
<dbReference type="FunFam" id="2.10.25.10:FF:000157">
    <property type="entry name" value="Neurogenic locus notch protein 1"/>
    <property type="match status" value="1"/>
</dbReference>
<dbReference type="FunFam" id="2.10.25.10:FF:000253">
    <property type="entry name" value="Neurogenic locus notch protein 1"/>
    <property type="match status" value="1"/>
</dbReference>
<dbReference type="FunFam" id="3.30.70.3310:FF:000001">
    <property type="entry name" value="Neurogenic locus notch protein 2"/>
    <property type="match status" value="1"/>
</dbReference>
<dbReference type="FunFam" id="2.10.25.10:FF:000125">
    <property type="entry name" value="Neurogenic locus notch protein-like"/>
    <property type="match status" value="1"/>
</dbReference>
<dbReference type="FunFam" id="2.10.25.10:FF:000299">
    <property type="entry name" value="Notch receptor 3"/>
    <property type="match status" value="1"/>
</dbReference>
<dbReference type="FunFam" id="2.10.25.10:FF:000516">
    <property type="entry name" value="Notch receptor 3"/>
    <property type="match status" value="1"/>
</dbReference>
<dbReference type="FunFam" id="2.10.25.10:FF:000095">
    <property type="entry name" value="Notch, isoform B"/>
    <property type="match status" value="1"/>
</dbReference>
<dbReference type="FunFam" id="2.10.25.10:FF:000143">
    <property type="entry name" value="Protein crumbs 1"/>
    <property type="match status" value="1"/>
</dbReference>
<dbReference type="FunFam" id="2.10.25.10:FF:000471">
    <property type="entry name" value="Protein lin-12"/>
    <property type="match status" value="1"/>
</dbReference>
<dbReference type="FunFam" id="2.10.25.10:FF:000146">
    <property type="entry name" value="Putative neurogenic locus notch"/>
    <property type="match status" value="1"/>
</dbReference>
<dbReference type="FunFam" id="2.10.25.10:FF:000309">
    <property type="entry name" value="Uncharacterized protein, isoform A"/>
    <property type="match status" value="1"/>
</dbReference>
<dbReference type="Gene3D" id="3.30.300.320">
    <property type="match status" value="1"/>
</dbReference>
<dbReference type="Gene3D" id="3.30.70.3310">
    <property type="match status" value="1"/>
</dbReference>
<dbReference type="Gene3D" id="1.25.40.20">
    <property type="entry name" value="Ankyrin repeat-containing domain"/>
    <property type="match status" value="1"/>
</dbReference>
<dbReference type="Gene3D" id="2.10.25.10">
    <property type="entry name" value="Laminin"/>
    <property type="match status" value="35"/>
</dbReference>
<dbReference type="InterPro" id="IPR002110">
    <property type="entry name" value="Ankyrin_rpt"/>
</dbReference>
<dbReference type="InterPro" id="IPR036770">
    <property type="entry name" value="Ankyrin_rpt-contain_sf"/>
</dbReference>
<dbReference type="InterPro" id="IPR001881">
    <property type="entry name" value="EGF-like_Ca-bd_dom"/>
</dbReference>
<dbReference type="InterPro" id="IPR013032">
    <property type="entry name" value="EGF-like_CS"/>
</dbReference>
<dbReference type="InterPro" id="IPR000742">
    <property type="entry name" value="EGF-like_dom"/>
</dbReference>
<dbReference type="InterPro" id="IPR000152">
    <property type="entry name" value="EGF-type_Asp/Asn_hydroxyl_site"/>
</dbReference>
<dbReference type="InterPro" id="IPR018097">
    <property type="entry name" value="EGF_Ca-bd_CS"/>
</dbReference>
<dbReference type="InterPro" id="IPR009030">
    <property type="entry name" value="Growth_fac_rcpt_cys_sf"/>
</dbReference>
<dbReference type="InterPro" id="IPR008297">
    <property type="entry name" value="Notch"/>
</dbReference>
<dbReference type="InterPro" id="IPR035993">
    <property type="entry name" value="Notch-like_dom_sf"/>
</dbReference>
<dbReference type="InterPro" id="IPR051355">
    <property type="entry name" value="Notch/Slit_guidance"/>
</dbReference>
<dbReference type="InterPro" id="IPR049883">
    <property type="entry name" value="NOTCH1_EGF-like"/>
</dbReference>
<dbReference type="InterPro" id="IPR022336">
    <property type="entry name" value="Notch_2"/>
</dbReference>
<dbReference type="InterPro" id="IPR024600">
    <property type="entry name" value="Notch_C"/>
</dbReference>
<dbReference type="InterPro" id="IPR000800">
    <property type="entry name" value="Notch_dom"/>
</dbReference>
<dbReference type="InterPro" id="IPR010660">
    <property type="entry name" value="Notch_NOD_dom"/>
</dbReference>
<dbReference type="InterPro" id="IPR011656">
    <property type="entry name" value="Notch_NODP_dom"/>
</dbReference>
<dbReference type="PANTHER" id="PTHR45836:SF15">
    <property type="entry name" value="NEUROGENIC LOCUS NOTCH HOMOLOG PROTEIN 2"/>
    <property type="match status" value="1"/>
</dbReference>
<dbReference type="PANTHER" id="PTHR45836">
    <property type="entry name" value="SLIT HOMOLOG"/>
    <property type="match status" value="1"/>
</dbReference>
<dbReference type="Pfam" id="PF00023">
    <property type="entry name" value="Ank"/>
    <property type="match status" value="2"/>
</dbReference>
<dbReference type="Pfam" id="PF12796">
    <property type="entry name" value="Ank_2"/>
    <property type="match status" value="1"/>
</dbReference>
<dbReference type="Pfam" id="PF00008">
    <property type="entry name" value="EGF"/>
    <property type="match status" value="20"/>
</dbReference>
<dbReference type="Pfam" id="PF07645">
    <property type="entry name" value="EGF_CA"/>
    <property type="match status" value="5"/>
</dbReference>
<dbReference type="Pfam" id="PF12661">
    <property type="entry name" value="hEGF"/>
    <property type="match status" value="7"/>
</dbReference>
<dbReference type="Pfam" id="PF06816">
    <property type="entry name" value="NOD"/>
    <property type="match status" value="1"/>
</dbReference>
<dbReference type="Pfam" id="PF07684">
    <property type="entry name" value="NODP"/>
    <property type="match status" value="1"/>
</dbReference>
<dbReference type="Pfam" id="PF00066">
    <property type="entry name" value="Notch"/>
    <property type="match status" value="3"/>
</dbReference>
<dbReference type="PIRSF" id="PIRSF002279">
    <property type="entry name" value="Notch"/>
    <property type="match status" value="1"/>
</dbReference>
<dbReference type="PRINTS" id="PR00010">
    <property type="entry name" value="EGFBLOOD"/>
</dbReference>
<dbReference type="PRINTS" id="PR01452">
    <property type="entry name" value="LNOTCHREPEAT"/>
</dbReference>
<dbReference type="PRINTS" id="PR01983">
    <property type="entry name" value="NOTCH"/>
</dbReference>
<dbReference type="PRINTS" id="PR01985">
    <property type="entry name" value="NOTCH2"/>
</dbReference>
<dbReference type="SMART" id="SM00248">
    <property type="entry name" value="ANK"/>
    <property type="match status" value="6"/>
</dbReference>
<dbReference type="SMART" id="SM01334">
    <property type="entry name" value="DUF3454"/>
    <property type="match status" value="1"/>
</dbReference>
<dbReference type="SMART" id="SM00181">
    <property type="entry name" value="EGF"/>
    <property type="match status" value="35"/>
</dbReference>
<dbReference type="SMART" id="SM00179">
    <property type="entry name" value="EGF_CA"/>
    <property type="match status" value="34"/>
</dbReference>
<dbReference type="SMART" id="SM00004">
    <property type="entry name" value="NL"/>
    <property type="match status" value="3"/>
</dbReference>
<dbReference type="SMART" id="SM01338">
    <property type="entry name" value="NOD"/>
    <property type="match status" value="1"/>
</dbReference>
<dbReference type="SMART" id="SM01339">
    <property type="entry name" value="NODP"/>
    <property type="match status" value="1"/>
</dbReference>
<dbReference type="SUPFAM" id="SSF48403">
    <property type="entry name" value="Ankyrin repeat"/>
    <property type="match status" value="1"/>
</dbReference>
<dbReference type="SUPFAM" id="SSF57196">
    <property type="entry name" value="EGF/Laminin"/>
    <property type="match status" value="20"/>
</dbReference>
<dbReference type="SUPFAM" id="SSF57184">
    <property type="entry name" value="Growth factor receptor domain"/>
    <property type="match status" value="4"/>
</dbReference>
<dbReference type="SUPFAM" id="SSF90193">
    <property type="entry name" value="Notch domain"/>
    <property type="match status" value="2"/>
</dbReference>
<dbReference type="PROSITE" id="PS50297">
    <property type="entry name" value="ANK_REP_REGION"/>
    <property type="match status" value="1"/>
</dbReference>
<dbReference type="PROSITE" id="PS50088">
    <property type="entry name" value="ANK_REPEAT"/>
    <property type="match status" value="4"/>
</dbReference>
<dbReference type="PROSITE" id="PS00010">
    <property type="entry name" value="ASX_HYDROXYL"/>
    <property type="match status" value="22"/>
</dbReference>
<dbReference type="PROSITE" id="PS00022">
    <property type="entry name" value="EGF_1"/>
    <property type="match status" value="34"/>
</dbReference>
<dbReference type="PROSITE" id="PS01186">
    <property type="entry name" value="EGF_2"/>
    <property type="match status" value="27"/>
</dbReference>
<dbReference type="PROSITE" id="PS50026">
    <property type="entry name" value="EGF_3"/>
    <property type="match status" value="35"/>
</dbReference>
<dbReference type="PROSITE" id="PS01187">
    <property type="entry name" value="EGF_CA"/>
    <property type="match status" value="22"/>
</dbReference>
<dbReference type="PROSITE" id="PS50258">
    <property type="entry name" value="LNR"/>
    <property type="match status" value="3"/>
</dbReference>
<name>NOTC2_MOUSE</name>
<feature type="signal peptide" evidence="5">
    <location>
        <begin position="1"/>
        <end position="25"/>
    </location>
</feature>
<feature type="chain" id="PRO_0000007686" description="Neurogenic locus notch homolog protein 2">
    <location>
        <begin position="26"/>
        <end position="2473"/>
    </location>
</feature>
<feature type="chain" id="PRO_0000007687" description="Notch 2 extracellular truncation" evidence="2">
    <location>
        <begin position="1668"/>
        <end position="2473"/>
    </location>
</feature>
<feature type="chain" id="PRO_0000007688" description="Notch 2 intracellular domain" evidence="19 20">
    <location>
        <begin position="1699"/>
        <end position="2473"/>
    </location>
</feature>
<feature type="topological domain" description="Extracellular" evidence="5">
    <location>
        <begin position="26"/>
        <end position="1679"/>
    </location>
</feature>
<feature type="transmembrane region" description="Helical" evidence="5">
    <location>
        <begin position="1680"/>
        <end position="1700"/>
    </location>
</feature>
<feature type="topological domain" description="Cytoplasmic" evidence="5">
    <location>
        <begin position="1701"/>
        <end position="2473"/>
    </location>
</feature>
<feature type="domain" description="EGF-like 1" evidence="6">
    <location>
        <begin position="26"/>
        <end position="63"/>
    </location>
</feature>
<feature type="domain" description="EGF-like 2" evidence="6">
    <location>
        <begin position="64"/>
        <end position="102"/>
    </location>
</feature>
<feature type="domain" description="EGF-like 3" evidence="6">
    <location>
        <begin position="105"/>
        <end position="143"/>
    </location>
</feature>
<feature type="domain" description="EGF-like 4" evidence="6">
    <location>
        <begin position="144"/>
        <end position="180"/>
    </location>
</feature>
<feature type="domain" description="EGF-like 5; calcium-binding" evidence="6">
    <location>
        <begin position="182"/>
        <end position="219"/>
    </location>
</feature>
<feature type="domain" description="EGF-like 6; incomplete" evidence="6">
    <location>
        <begin position="221"/>
        <end position="258"/>
    </location>
</feature>
<feature type="domain" description="EGF-like 7; calcium-binding" evidence="6">
    <location>
        <begin position="260"/>
        <end position="296"/>
    </location>
</feature>
<feature type="domain" description="EGF-like 8; calcium-binding" evidence="6">
    <location>
        <begin position="298"/>
        <end position="336"/>
    </location>
</feature>
<feature type="domain" description="EGF-like 9; calcium-binding" evidence="6">
    <location>
        <begin position="338"/>
        <end position="374"/>
    </location>
</feature>
<feature type="domain" description="EGF-like 10" evidence="6">
    <location>
        <begin position="375"/>
        <end position="413"/>
    </location>
</feature>
<feature type="domain" description="EGF-like 11; calcium-binding" evidence="6">
    <location>
        <begin position="415"/>
        <end position="454"/>
    </location>
</feature>
<feature type="domain" description="EGF-like 12; calcium-binding" evidence="6">
    <location>
        <begin position="456"/>
        <end position="492"/>
    </location>
</feature>
<feature type="domain" description="EGF-like 13; calcium-binding" evidence="6">
    <location>
        <begin position="494"/>
        <end position="530"/>
    </location>
</feature>
<feature type="domain" description="EGF-like 14; calcium-binding" evidence="6">
    <location>
        <begin position="532"/>
        <end position="568"/>
    </location>
</feature>
<feature type="domain" description="EGF-like 15; calcium-binding" evidence="6">
    <location>
        <begin position="570"/>
        <end position="605"/>
    </location>
</feature>
<feature type="domain" description="EGF-like 16; calcium-binding" evidence="6">
    <location>
        <begin position="607"/>
        <end position="643"/>
    </location>
</feature>
<feature type="domain" description="EGF-like 17; calcium-binding" evidence="6">
    <location>
        <begin position="645"/>
        <end position="680"/>
    </location>
</feature>
<feature type="domain" description="EGF-like 18; calcium-binding" evidence="6">
    <location>
        <begin position="682"/>
        <end position="718"/>
    </location>
</feature>
<feature type="domain" description="EGF-like 19" evidence="6">
    <location>
        <begin position="720"/>
        <end position="755"/>
    </location>
</feature>
<feature type="domain" description="EGF-like 20; calcium-binding" evidence="6">
    <location>
        <begin position="757"/>
        <end position="793"/>
    </location>
</feature>
<feature type="domain" description="EGF-like 21; calcium-binding" evidence="6">
    <location>
        <begin position="795"/>
        <end position="831"/>
    </location>
</feature>
<feature type="domain" description="EGF-like 22" evidence="6">
    <location>
        <begin position="833"/>
        <end position="871"/>
    </location>
</feature>
<feature type="domain" description="EGF-like 23; calcium-binding" evidence="6">
    <location>
        <begin position="873"/>
        <end position="909"/>
    </location>
</feature>
<feature type="domain" description="EGF-like 24; calcium-binding" evidence="6">
    <location>
        <begin position="911"/>
        <end position="947"/>
    </location>
</feature>
<feature type="domain" description="EGF-like 25; calcium-binding" evidence="6">
    <location>
        <begin position="949"/>
        <end position="985"/>
    </location>
</feature>
<feature type="domain" description="EGF-like 26; calcium-binding" evidence="6">
    <location>
        <begin position="987"/>
        <end position="1023"/>
    </location>
</feature>
<feature type="domain" description="EGF-like 27; calcium-binding" evidence="6">
    <location>
        <begin position="1025"/>
        <end position="1061"/>
    </location>
</feature>
<feature type="domain" description="EGF-like 28" evidence="6">
    <location>
        <begin position="1063"/>
        <end position="1099"/>
    </location>
</feature>
<feature type="domain" description="EGF-like 29" evidence="18">
    <location>
        <begin position="1101"/>
        <end position="1147"/>
    </location>
</feature>
<feature type="domain" description="EGF-like 30; calcium-binding" evidence="6">
    <location>
        <begin position="1149"/>
        <end position="1185"/>
    </location>
</feature>
<feature type="domain" description="EGF-like 31; calcium-binding" evidence="6">
    <location>
        <begin position="1187"/>
        <end position="1223"/>
    </location>
</feature>
<feature type="domain" description="EGF-like 32; calcium-binding" evidence="6">
    <location>
        <begin position="1225"/>
        <end position="1262"/>
    </location>
</feature>
<feature type="domain" description="EGF-like 33" evidence="6">
    <location>
        <begin position="1264"/>
        <end position="1302"/>
    </location>
</feature>
<feature type="domain" description="EGF-like 34" evidence="6">
    <location>
        <begin position="1304"/>
        <end position="1343"/>
    </location>
</feature>
<feature type="domain" description="EGF-like 35" evidence="6">
    <location>
        <begin position="1375"/>
        <end position="1412"/>
    </location>
</feature>
<feature type="repeat" description="LNR 1">
    <location>
        <begin position="1425"/>
        <end position="1465"/>
    </location>
</feature>
<feature type="repeat" description="LNR 2">
    <location>
        <begin position="1466"/>
        <end position="1502"/>
    </location>
</feature>
<feature type="repeat" description="LNR 3">
    <location>
        <begin position="1503"/>
        <end position="1544"/>
    </location>
</feature>
<feature type="repeat" description="ANK 1">
    <location>
        <begin position="1828"/>
        <end position="1872"/>
    </location>
</feature>
<feature type="repeat" description="ANK 2">
    <location>
        <begin position="1877"/>
        <end position="1906"/>
    </location>
</feature>
<feature type="repeat" description="ANK 3">
    <location>
        <begin position="1910"/>
        <end position="1940"/>
    </location>
</feature>
<feature type="repeat" description="ANK 4">
    <location>
        <begin position="1944"/>
        <end position="1973"/>
    </location>
</feature>
<feature type="repeat" description="ANK 5">
    <location>
        <begin position="1977"/>
        <end position="2006"/>
    </location>
</feature>
<feature type="repeat" description="ANK 6">
    <location>
        <begin position="2010"/>
        <end position="2039"/>
    </location>
</feature>
<feature type="region of interest" description="Negative regulatory region (NRR)" evidence="1">
    <location>
        <begin position="1425"/>
        <end position="1679"/>
    </location>
</feature>
<feature type="region of interest" description="Disordered" evidence="7">
    <location>
        <begin position="1755"/>
        <end position="1778"/>
    </location>
</feature>
<feature type="region of interest" description="Disordered" evidence="7">
    <location>
        <begin position="2098"/>
        <end position="2117"/>
    </location>
</feature>
<feature type="region of interest" description="Disordered" evidence="7">
    <location>
        <begin position="2122"/>
        <end position="2169"/>
    </location>
</feature>
<feature type="region of interest" description="Disordered" evidence="7">
    <location>
        <begin position="2382"/>
        <end position="2473"/>
    </location>
</feature>
<feature type="compositionally biased region" description="Basic residues" evidence="7">
    <location>
        <begin position="2099"/>
        <end position="2108"/>
    </location>
</feature>
<feature type="compositionally biased region" description="Polar residues" evidence="7">
    <location>
        <begin position="2140"/>
        <end position="2151"/>
    </location>
</feature>
<feature type="compositionally biased region" description="Polar residues" evidence="7">
    <location>
        <begin position="2390"/>
        <end position="2400"/>
    </location>
</feature>
<feature type="compositionally biased region" description="Low complexity" evidence="7">
    <location>
        <begin position="2419"/>
        <end position="2446"/>
    </location>
</feature>
<feature type="compositionally biased region" description="Gly residues" evidence="7">
    <location>
        <begin position="2447"/>
        <end position="2456"/>
    </location>
</feature>
<feature type="site" description="Essential for O-xylosylation" evidence="15">
    <location>
        <position position="614"/>
    </location>
</feature>
<feature type="modified residue" description="Phosphothreonine" evidence="3">
    <location>
        <position position="1718"/>
    </location>
</feature>
<feature type="modified residue" description="Phosphoserine" evidence="22">
    <location>
        <position position="1780"/>
    </location>
</feature>
<feature type="modified residue" description="Phosphothreonine" evidence="3">
    <location>
        <position position="1803"/>
    </location>
</feature>
<feature type="modified residue" description="Phosphoserine" evidence="3">
    <location>
        <position position="1805"/>
    </location>
</feature>
<feature type="modified residue" description="Phosphothreonine" evidence="3">
    <location>
        <position position="1809"/>
    </location>
</feature>
<feature type="modified residue" description="Phosphoserine" evidence="22">
    <location>
        <position position="1843"/>
    </location>
</feature>
<feature type="modified residue" description="Phosphoserine" evidence="22">
    <location>
        <position position="1846"/>
    </location>
</feature>
<feature type="modified residue" description="Phosphoserine" evidence="3">
    <location>
        <position position="2071"/>
    </location>
</feature>
<feature type="modified residue" description="Phosphoserine" evidence="4">
    <location>
        <position position="2079"/>
    </location>
</feature>
<feature type="modified residue" description="Phosphoserine" evidence="3">
    <location>
        <position position="2082"/>
    </location>
</feature>
<feature type="modified residue" description="Phosphothreonine" evidence="3">
    <location>
        <position position="2098"/>
    </location>
</feature>
<feature type="glycosylation site" description="N-linked (GlcNAc...) asparagine" evidence="5">
    <location>
        <position position="46"/>
    </location>
</feature>
<feature type="glycosylation site" description="N-linked (GlcNAc...) asparagine" evidence="5">
    <location>
        <position position="155"/>
    </location>
</feature>
<feature type="glycosylation site" description="O-linked (Glc...) serine; alternate" evidence="15">
    <location>
        <position position="613"/>
    </location>
</feature>
<feature type="glycosylation site" description="O-linked (Xyl...) serine; alternate" evidence="15">
    <location>
        <position position="613"/>
    </location>
</feature>
<feature type="glycosylation site" description="N-linked (GlcNAc...) asparagine" evidence="5">
    <location>
        <position position="733"/>
    </location>
</feature>
<feature type="glycosylation site" description="N-linked (GlcNAc...) asparagine" evidence="5">
    <location>
        <position position="1102"/>
    </location>
</feature>
<feature type="glycosylation site" description="N-linked (GlcNAc...) asparagine" evidence="5">
    <location>
        <position position="1465"/>
    </location>
</feature>
<feature type="disulfide bond" evidence="1">
    <location>
        <begin position="28"/>
        <end position="41"/>
    </location>
</feature>
<feature type="disulfide bond" evidence="1">
    <location>
        <begin position="35"/>
        <end position="51"/>
    </location>
</feature>
<feature type="disulfide bond" evidence="1">
    <location>
        <begin position="53"/>
        <end position="62"/>
    </location>
</feature>
<feature type="disulfide bond" evidence="1">
    <location>
        <begin position="68"/>
        <end position="79"/>
    </location>
</feature>
<feature type="disulfide bond" evidence="1">
    <location>
        <begin position="73"/>
        <end position="90"/>
    </location>
</feature>
<feature type="disulfide bond" evidence="1">
    <location>
        <begin position="92"/>
        <end position="101"/>
    </location>
</feature>
<feature type="disulfide bond" evidence="1">
    <location>
        <begin position="109"/>
        <end position="121"/>
    </location>
</feature>
<feature type="disulfide bond" evidence="1">
    <location>
        <begin position="115"/>
        <end position="131"/>
    </location>
</feature>
<feature type="disulfide bond" evidence="1">
    <location>
        <begin position="133"/>
        <end position="142"/>
    </location>
</feature>
<feature type="disulfide bond" evidence="1">
    <location>
        <begin position="148"/>
        <end position="159"/>
    </location>
</feature>
<feature type="disulfide bond" evidence="1">
    <location>
        <begin position="153"/>
        <end position="168"/>
    </location>
</feature>
<feature type="disulfide bond" evidence="1">
    <location>
        <begin position="170"/>
        <end position="179"/>
    </location>
</feature>
<feature type="disulfide bond" evidence="1">
    <location>
        <begin position="186"/>
        <end position="198"/>
    </location>
</feature>
<feature type="disulfide bond" evidence="1">
    <location>
        <begin position="192"/>
        <end position="207"/>
    </location>
</feature>
<feature type="disulfide bond" evidence="1">
    <location>
        <begin position="209"/>
        <end position="218"/>
    </location>
</feature>
<feature type="disulfide bond" evidence="1">
    <location>
        <begin position="230"/>
        <end position="246"/>
    </location>
</feature>
<feature type="disulfide bond" evidence="1">
    <location>
        <begin position="248"/>
        <end position="257"/>
    </location>
</feature>
<feature type="disulfide bond" evidence="1">
    <location>
        <begin position="264"/>
        <end position="275"/>
    </location>
</feature>
<feature type="disulfide bond" evidence="1">
    <location>
        <begin position="269"/>
        <end position="284"/>
    </location>
</feature>
<feature type="disulfide bond" evidence="1">
    <location>
        <begin position="286"/>
        <end position="295"/>
    </location>
</feature>
<feature type="disulfide bond" evidence="1">
    <location>
        <begin position="302"/>
        <end position="315"/>
    </location>
</feature>
<feature type="disulfide bond" evidence="1">
    <location>
        <begin position="309"/>
        <end position="324"/>
    </location>
</feature>
<feature type="disulfide bond" evidence="1">
    <location>
        <begin position="326"/>
        <end position="335"/>
    </location>
</feature>
<feature type="disulfide bond" evidence="1">
    <location>
        <begin position="342"/>
        <end position="353"/>
    </location>
</feature>
<feature type="disulfide bond" evidence="1">
    <location>
        <begin position="347"/>
        <end position="362"/>
    </location>
</feature>
<feature type="disulfide bond" evidence="1">
    <location>
        <begin position="364"/>
        <end position="373"/>
    </location>
</feature>
<feature type="disulfide bond" evidence="1">
    <location>
        <begin position="379"/>
        <end position="390"/>
    </location>
</feature>
<feature type="disulfide bond" evidence="1">
    <location>
        <begin position="384"/>
        <end position="401"/>
    </location>
</feature>
<feature type="disulfide bond" evidence="1">
    <location>
        <begin position="403"/>
        <end position="412"/>
    </location>
</feature>
<feature type="disulfide bond" evidence="1">
    <location>
        <begin position="419"/>
        <end position="433"/>
    </location>
</feature>
<feature type="disulfide bond" evidence="1">
    <location>
        <begin position="427"/>
        <end position="442"/>
    </location>
</feature>
<feature type="disulfide bond" evidence="1">
    <location>
        <begin position="444"/>
        <end position="453"/>
    </location>
</feature>
<feature type="disulfide bond" evidence="1">
    <location>
        <begin position="460"/>
        <end position="471"/>
    </location>
</feature>
<feature type="disulfide bond" evidence="1">
    <location>
        <begin position="465"/>
        <end position="480"/>
    </location>
</feature>
<feature type="disulfide bond" evidence="1">
    <location>
        <begin position="482"/>
        <end position="491"/>
    </location>
</feature>
<feature type="disulfide bond" evidence="1">
    <location>
        <begin position="498"/>
        <end position="509"/>
    </location>
</feature>
<feature type="disulfide bond" evidence="1">
    <location>
        <begin position="503"/>
        <end position="518"/>
    </location>
</feature>
<feature type="disulfide bond" evidence="1">
    <location>
        <begin position="520"/>
        <end position="529"/>
    </location>
</feature>
<feature type="disulfide bond" evidence="1">
    <location>
        <begin position="536"/>
        <end position="547"/>
    </location>
</feature>
<feature type="disulfide bond" evidence="1">
    <location>
        <begin position="541"/>
        <end position="556"/>
    </location>
</feature>
<feature type="disulfide bond" evidence="1">
    <location>
        <begin position="558"/>
        <end position="567"/>
    </location>
</feature>
<feature type="disulfide bond" evidence="1">
    <location>
        <begin position="574"/>
        <end position="584"/>
    </location>
</feature>
<feature type="disulfide bond" evidence="1">
    <location>
        <begin position="579"/>
        <end position="593"/>
    </location>
</feature>
<feature type="disulfide bond" evidence="1">
    <location>
        <begin position="595"/>
        <end position="604"/>
    </location>
</feature>
<feature type="disulfide bond" evidence="1">
    <location>
        <begin position="611"/>
        <end position="622"/>
    </location>
</feature>
<feature type="disulfide bond" evidence="1">
    <location>
        <begin position="616"/>
        <end position="631"/>
    </location>
</feature>
<feature type="disulfide bond" evidence="1">
    <location>
        <begin position="633"/>
        <end position="642"/>
    </location>
</feature>
<feature type="disulfide bond" evidence="1">
    <location>
        <begin position="649"/>
        <end position="659"/>
    </location>
</feature>
<feature type="disulfide bond" evidence="1">
    <location>
        <begin position="654"/>
        <end position="668"/>
    </location>
</feature>
<feature type="disulfide bond" evidence="1">
    <location>
        <begin position="670"/>
        <end position="679"/>
    </location>
</feature>
<feature type="disulfide bond" evidence="1">
    <location>
        <begin position="686"/>
        <end position="697"/>
    </location>
</feature>
<feature type="disulfide bond" evidence="1">
    <location>
        <begin position="691"/>
        <end position="706"/>
    </location>
</feature>
<feature type="disulfide bond" evidence="1">
    <location>
        <begin position="708"/>
        <end position="717"/>
    </location>
</feature>
<feature type="disulfide bond" evidence="1">
    <location>
        <begin position="724"/>
        <end position="734"/>
    </location>
</feature>
<feature type="disulfide bond" evidence="1">
    <location>
        <begin position="729"/>
        <end position="743"/>
    </location>
</feature>
<feature type="disulfide bond" evidence="1">
    <location>
        <begin position="745"/>
        <end position="754"/>
    </location>
</feature>
<feature type="disulfide bond" evidence="1">
    <location>
        <begin position="761"/>
        <end position="772"/>
    </location>
</feature>
<feature type="disulfide bond" evidence="1">
    <location>
        <begin position="766"/>
        <end position="781"/>
    </location>
</feature>
<feature type="disulfide bond" evidence="1">
    <location>
        <begin position="783"/>
        <end position="792"/>
    </location>
</feature>
<feature type="disulfide bond" evidence="1">
    <location>
        <begin position="799"/>
        <end position="810"/>
    </location>
</feature>
<feature type="disulfide bond" evidence="1">
    <location>
        <begin position="804"/>
        <end position="819"/>
    </location>
</feature>
<feature type="disulfide bond" evidence="1">
    <location>
        <begin position="821"/>
        <end position="830"/>
    </location>
</feature>
<feature type="disulfide bond" evidence="1">
    <location>
        <begin position="837"/>
        <end position="848"/>
    </location>
</feature>
<feature type="disulfide bond" evidence="1">
    <location>
        <begin position="842"/>
        <end position="859"/>
    </location>
</feature>
<feature type="disulfide bond" evidence="1">
    <location>
        <begin position="861"/>
        <end position="870"/>
    </location>
</feature>
<feature type="disulfide bond" evidence="1">
    <location>
        <begin position="877"/>
        <end position="888"/>
    </location>
</feature>
<feature type="disulfide bond" evidence="1">
    <location>
        <begin position="882"/>
        <end position="897"/>
    </location>
</feature>
<feature type="disulfide bond" evidence="1">
    <location>
        <begin position="899"/>
        <end position="908"/>
    </location>
</feature>
<feature type="disulfide bond" evidence="1">
    <location>
        <begin position="915"/>
        <end position="926"/>
    </location>
</feature>
<feature type="disulfide bond" evidence="1">
    <location>
        <begin position="920"/>
        <end position="935"/>
    </location>
</feature>
<feature type="disulfide bond" evidence="1">
    <location>
        <begin position="937"/>
        <end position="946"/>
    </location>
</feature>
<feature type="disulfide bond" evidence="1">
    <location>
        <begin position="953"/>
        <end position="964"/>
    </location>
</feature>
<feature type="disulfide bond" evidence="1">
    <location>
        <begin position="958"/>
        <end position="973"/>
    </location>
</feature>
<feature type="disulfide bond" evidence="1">
    <location>
        <begin position="975"/>
        <end position="984"/>
    </location>
</feature>
<feature type="disulfide bond" evidence="1">
    <location>
        <begin position="991"/>
        <end position="1002"/>
    </location>
</feature>
<feature type="disulfide bond" evidence="1">
    <location>
        <begin position="996"/>
        <end position="1011"/>
    </location>
</feature>
<feature type="disulfide bond" evidence="1">
    <location>
        <begin position="1013"/>
        <end position="1022"/>
    </location>
</feature>
<feature type="disulfide bond" evidence="1">
    <location>
        <begin position="1029"/>
        <end position="1040"/>
    </location>
</feature>
<feature type="disulfide bond" evidence="1">
    <location>
        <begin position="1034"/>
        <end position="1049"/>
    </location>
</feature>
<feature type="disulfide bond" evidence="1">
    <location>
        <begin position="1051"/>
        <end position="1060"/>
    </location>
</feature>
<feature type="disulfide bond" evidence="1">
    <location>
        <begin position="1067"/>
        <end position="1078"/>
    </location>
</feature>
<feature type="disulfide bond" evidence="1">
    <location>
        <begin position="1072"/>
        <end position="1087"/>
    </location>
</feature>
<feature type="disulfide bond" evidence="1">
    <location>
        <begin position="1089"/>
        <end position="1098"/>
    </location>
</feature>
<feature type="disulfide bond" evidence="18">
    <location>
        <begin position="1105"/>
        <end position="1126"/>
    </location>
</feature>
<feature type="disulfide bond" evidence="1">
    <location>
        <begin position="1120"/>
        <end position="1135"/>
    </location>
</feature>
<feature type="disulfide bond" evidence="1">
    <location>
        <begin position="1137"/>
        <end position="1146"/>
    </location>
</feature>
<feature type="disulfide bond" evidence="1">
    <location>
        <begin position="1153"/>
        <end position="1164"/>
    </location>
</feature>
<feature type="disulfide bond" evidence="1">
    <location>
        <begin position="1158"/>
        <end position="1173"/>
    </location>
</feature>
<feature type="disulfide bond" evidence="1">
    <location>
        <begin position="1175"/>
        <end position="1184"/>
    </location>
</feature>
<feature type="disulfide bond" evidence="1">
    <location>
        <begin position="1191"/>
        <end position="1202"/>
    </location>
</feature>
<feature type="disulfide bond" evidence="1">
    <location>
        <begin position="1196"/>
        <end position="1211"/>
    </location>
</feature>
<feature type="disulfide bond" evidence="1">
    <location>
        <begin position="1213"/>
        <end position="1222"/>
    </location>
</feature>
<feature type="disulfide bond" evidence="1">
    <location>
        <begin position="1229"/>
        <end position="1241"/>
    </location>
</feature>
<feature type="disulfide bond" evidence="1">
    <location>
        <begin position="1235"/>
        <end position="1250"/>
    </location>
</feature>
<feature type="disulfide bond" evidence="1">
    <location>
        <begin position="1252"/>
        <end position="1261"/>
    </location>
</feature>
<feature type="disulfide bond" evidence="1">
    <location>
        <begin position="1268"/>
        <end position="1281"/>
    </location>
</feature>
<feature type="disulfide bond" evidence="1">
    <location>
        <begin position="1273"/>
        <end position="1290"/>
    </location>
</feature>
<feature type="disulfide bond" evidence="1">
    <location>
        <begin position="1292"/>
        <end position="1301"/>
    </location>
</feature>
<feature type="disulfide bond" evidence="1">
    <location>
        <begin position="1308"/>
        <end position="1319"/>
    </location>
</feature>
<feature type="disulfide bond" evidence="1">
    <location>
        <begin position="1313"/>
        <end position="1331"/>
    </location>
</feature>
<feature type="disulfide bond" evidence="1">
    <location>
        <begin position="1333"/>
        <end position="1346"/>
    </location>
</feature>
<feature type="disulfide bond" evidence="1">
    <location>
        <begin position="1378"/>
        <end position="1389"/>
    </location>
</feature>
<feature type="disulfide bond" evidence="1">
    <location>
        <begin position="1383"/>
        <end position="1400"/>
    </location>
</feature>
<feature type="disulfide bond" evidence="1">
    <location>
        <begin position="1402"/>
        <end position="1411"/>
    </location>
</feature>
<feature type="disulfide bond" evidence="1">
    <location>
        <begin position="1425"/>
        <end position="1448"/>
    </location>
</feature>
<feature type="disulfide bond" evidence="1">
    <location>
        <begin position="1430"/>
        <end position="1443"/>
    </location>
</feature>
<feature type="disulfide bond" evidence="1">
    <location>
        <begin position="1439"/>
        <end position="1455"/>
    </location>
</feature>
<feature type="disulfide bond" evidence="1">
    <location>
        <begin position="1466"/>
        <end position="1489"/>
    </location>
</feature>
<feature type="disulfide bond" evidence="1">
    <location>
        <begin position="1472"/>
        <end position="1484"/>
    </location>
</feature>
<feature type="disulfide bond" evidence="1">
    <location>
        <begin position="1480"/>
        <end position="1496"/>
    </location>
</feature>
<feature type="disulfide bond" evidence="1">
    <location>
        <begin position="1503"/>
        <end position="1527"/>
    </location>
</feature>
<feature type="disulfide bond" evidence="1">
    <location>
        <begin position="1509"/>
        <end position="1522"/>
    </location>
</feature>
<feature type="disulfide bond" evidence="1">
    <location>
        <begin position="1518"/>
        <end position="1534"/>
    </location>
</feature>
<feature type="disulfide bond" evidence="1">
    <location>
        <begin position="1634"/>
        <end position="1641"/>
    </location>
</feature>
<feature type="splice variant" id="VSP_001405" description="In isoform 2." evidence="18">
    <location>
        <begin position="1304"/>
        <end position="1510"/>
    </location>
</feature>
<feature type="mutagenesis site" description="No effect on O-glycosylation by POGLUT1. Loss of O-xylosylation." evidence="15">
    <original>S</original>
    <variation>A</variation>
    <location>
        <position position="614"/>
    </location>
</feature>
<feature type="mutagenesis site" description="No effect on NICD processing." evidence="9 10">
    <original>M</original>
    <variation>L</variation>
    <location>
        <position position="1701"/>
    </location>
</feature>
<feature type="mutagenesis site" description="Decreased NICD processing." evidence="9 10">
    <original>M</original>
    <variation>V</variation>
    <location>
        <position position="1701"/>
    </location>
</feature>
<feature type="sequence conflict" description="In Ref. 1; BAA22094." evidence="18" ref="1">
    <original>A</original>
    <variation>D</variation>
    <location>
        <position position="3"/>
    </location>
</feature>
<feature type="sequence conflict" description="In Ref. 1; BAA22094." evidence="18" ref="1">
    <original>P</original>
    <variation>G</variation>
    <location>
        <position position="210"/>
    </location>
</feature>
<feature type="sequence conflict" description="In Ref. 1; BAA22094." evidence="18" ref="1">
    <original>PCAPS</original>
    <variation>RGL</variation>
    <location>
        <begin position="224"/>
        <end position="228"/>
    </location>
</feature>
<feature type="sequence conflict" description="In Ref. 1; BAA22094." evidence="18" ref="1">
    <original>F</original>
    <variation>L</variation>
    <location>
        <position position="244"/>
    </location>
</feature>
<feature type="sequence conflict" description="In Ref. 1; BAA22094." evidence="18" ref="1">
    <original>C</original>
    <variation>L</variation>
    <location>
        <position position="1342"/>
    </location>
</feature>
<feature type="sequence conflict" description="In Ref. 1; BAA22094." evidence="18" ref="1">
    <original>R</original>
    <variation>S</variation>
    <location>
        <position position="1801"/>
    </location>
</feature>
<feature type="sequence conflict" description="In Ref. 1; BAA22094." evidence="18" ref="1">
    <original>A</original>
    <variation>R</variation>
    <location>
        <position position="1904"/>
    </location>
</feature>
<feature type="sequence conflict" description="In Ref. 1; BAA22094." evidence="18" ref="1">
    <original>A</original>
    <variation>G</variation>
    <location>
        <position position="1921"/>
    </location>
</feature>
<feature type="sequence conflict" description="In Ref. 1; BAA22094." evidence="18" ref="1">
    <original>G</original>
    <variation>R</variation>
    <location>
        <position position="2315"/>
    </location>
</feature>
<comment type="function">
    <text evidence="3 8 14">Functions as a receptor for membrane-bound ligands Jagged-1 (JAG1), Jagged-2 (JAG2) and Delta-1 (DLL1) to regulate cell-fate determination (PubMed:10393120). Upon ligand activation through the released notch intracellular domain (NICD) it forms a transcriptional activator complex with RBPJ/RBPSUH and activates genes of the enhancer of split locus (PubMed:10393120, PubMed:18710934). Affects the implementation of differentiation, proliferation and apoptotic programs (PubMed:10393120, PubMed:18710934). May play an essential role in postimplantation development, probably in some aspect of cell specification and/or differentiation (By similarity). In collaboration with RELA/p65 enhances NFATc1 promoter activity and positively regulates RANKL-induced osteoclast differentiation (PubMed:18710934). Positively regulates self-renewal of liver cancer cells (By similarity).</text>
</comment>
<comment type="subunit">
    <text evidence="1 3 11 12 14">Heterodimer of a C-terminal fragment N(TM) and an N-terminal fragment N(EC) which are probably linked by disulfide bonds. Interacts with MAML1, MAML2 and MAML3 which act as transcriptional coactivators for NOTCH2. Interacts with RELA/p65. Interacts with HIF1AN. Interacts (via ANK repeats) with TCIM, the interaction inhibits the nuclear translocation of NOTCH2 N2ICD (By similarity). Interacts with CUL1, RBX1, SKP1 and FBXW7 that are SCF(FBXW7) E3 ubiquitin-protein ligase complex components. Interacts with MINAR1; this interaction increases MINAR1 stability and function (By similarity). Interacts with MDK; this interaction mediates a nuclear accumulation of NOTCH2 and therefore activation of NOTCH2 signaling leading to interaction between HES1 and STAT3 (By similarity). Interacts with MINAR2 (By similarity).</text>
</comment>
<comment type="subcellular location">
    <molecule>Notch 2 extracellular truncation</molecule>
    <subcellularLocation>
        <location evidence="3">Cell membrane</location>
        <topology evidence="3">Single-pass type I membrane protein</topology>
    </subcellularLocation>
</comment>
<comment type="subcellular location">
    <molecule>Notch 2 intracellular domain</molecule>
    <subcellularLocation>
        <location evidence="3">Nucleus</location>
    </subcellularLocation>
    <subcellularLocation>
        <location evidence="3">Cytoplasm</location>
    </subcellularLocation>
    <text evidence="3">Following proteolytical processing NICD is translocated to the nucleus. Retained at the cytoplasm by TCIM.</text>
</comment>
<comment type="alternative products">
    <event type="alternative splicing"/>
    <isoform>
        <id>O35516-1</id>
        <name>1</name>
        <sequence type="displayed"/>
    </isoform>
    <isoform>
        <id>O35516-2</id>
        <name>2</name>
        <sequence type="described" ref="VSP_001405"/>
    </isoform>
</comment>
<comment type="tissue specificity">
    <text>Expressed in the brain, liver, kidney, neuroepithelia, somites, optic vesicles and branchial arches, but not heart.</text>
</comment>
<comment type="developmental stage">
    <text evidence="16">Expressed in the embryonic ventricular zone, the postnatal ependymal cells, and the choroid plexus throughout embryonic and postnatal development.</text>
</comment>
<comment type="PTM">
    <text evidence="2 9 10">Synthesized in the endoplasmic reticulum as an inactive form which is proteolytically cleaved by a furin-like convertase in the trans-Golgi network before it reaches the plasma membrane to yield an active, ligand-accessible form (PubMed:11459941, PubMed:11518718). Cleavage results in a C-terminal fragment N(TM) and a N-terminal fragment N(EC) (PubMed:11459941, PubMed:11518718). Following ligand binding, it is cleaved by TNF-alpha converting enzyme (TACE) to yield a membrane-associated intermediate fragment called notch extracellular truncation (NEXT) (By similarity). This fragment is then cleaved by presenilin dependent gamma-secretase to release a notch-derived peptide containing the intracellular domain (NICD) from the membrane (PubMed:11459941, PubMed:11518718).</text>
</comment>
<comment type="PTM">
    <text evidence="13">Hydroxylated by HIF1AN.</text>
</comment>
<comment type="PTM">
    <text evidence="15">Can be either O-glucosylated or O-xylosylated at Ser-613 by POGLUT1.</text>
</comment>
<comment type="PTM">
    <text evidence="3">Phosphorylated by GSK3. GSK3-mediated phosphorylation is necessary for NOTCH2 recognition by FBXW7, ubiquitination and degradation via the ubiquitin proteasome pathway.</text>
</comment>
<comment type="similarity">
    <text evidence="18">Belongs to the NOTCH family.</text>
</comment>
<comment type="sequence caution" evidence="18">
    <conflict type="frameshift">
        <sequence resource="EMBL-CDS" id="BAA22094"/>
    </conflict>
</comment>
<keyword id="KW-0010">Activator</keyword>
<keyword id="KW-0025">Alternative splicing</keyword>
<keyword id="KW-0040">ANK repeat</keyword>
<keyword id="KW-1003">Cell membrane</keyword>
<keyword id="KW-0963">Cytoplasm</keyword>
<keyword id="KW-0217">Developmental protein</keyword>
<keyword id="KW-0221">Differentiation</keyword>
<keyword id="KW-1015">Disulfide bond</keyword>
<keyword id="KW-0245">EGF-like domain</keyword>
<keyword id="KW-0325">Glycoprotein</keyword>
<keyword id="KW-0472">Membrane</keyword>
<keyword id="KW-0914">Notch signaling pathway</keyword>
<keyword id="KW-0539">Nucleus</keyword>
<keyword id="KW-0597">Phosphoprotein</keyword>
<keyword id="KW-0675">Receptor</keyword>
<keyword id="KW-1185">Reference proteome</keyword>
<keyword id="KW-0677">Repeat</keyword>
<keyword id="KW-0732">Signal</keyword>
<keyword id="KW-0804">Transcription</keyword>
<keyword id="KW-0805">Transcription regulation</keyword>
<keyword id="KW-0812">Transmembrane</keyword>
<keyword id="KW-1133">Transmembrane helix</keyword>
<keyword id="KW-0832">Ubl conjugation</keyword>
<proteinExistence type="evidence at protein level"/>
<organism>
    <name type="scientific">Mus musculus</name>
    <name type="common">Mouse</name>
    <dbReference type="NCBI Taxonomy" id="10090"/>
    <lineage>
        <taxon>Eukaryota</taxon>
        <taxon>Metazoa</taxon>
        <taxon>Chordata</taxon>
        <taxon>Craniata</taxon>
        <taxon>Vertebrata</taxon>
        <taxon>Euteleostomi</taxon>
        <taxon>Mammalia</taxon>
        <taxon>Eutheria</taxon>
        <taxon>Euarchontoglires</taxon>
        <taxon>Glires</taxon>
        <taxon>Rodentia</taxon>
        <taxon>Myomorpha</taxon>
        <taxon>Muroidea</taxon>
        <taxon>Muridae</taxon>
        <taxon>Murinae</taxon>
        <taxon>Mus</taxon>
        <taxon>Mus</taxon>
    </lineage>
</organism>
<sequence>MPALRPAALRALLWLWLCGAGPAHALQCRGGQEPCVNEGTCVTYHNGTGFCRCPEGFLGEYCQHRDPCEKNRCQNGGTCVPQGMLGKATCRCAPGFTGEDCQYSTSHPCFVSRPCQNGGTCHMLSRDTYECTCQVGFTGKQCQWTDACLSHPCENGSTCTSVASQFSCKCPAGLTGQKCEADINECDIPGRCQHGGTCLNLPGSYRCQCPQGFTGQHCDSPYVPCAPSPCVNGGTCRQTGDFTFECNCLPGFEGSTCERNIDDCPNHKCQNGGVCVDGVNTYNCRCPPQWTGQFCTEDVDECLLQPNACQNGGTCTNRNGGYGCVCVNGWSGDDCSENIDDCAYASCTPGSTCIDRVASFSCLCPEGKAGLLCHLDDACISNPCHKGALCDTNPLNGQYICTCPQGYKGADCTEDVDECAMANSNPCEHAGKCVNTDGAFHCECLKGYAGPRCEMDINECHSDPCQNDATCLDKIGGFTCLCMPGFKGVHCELEVNECQSNPCVNNGQCVDKVNRFQCLCPPGFTGPVCQIDIDDCSSTPCLNGAKCIDHPNGYECQCATGFTGILCDENIDNCDPDPCHHGQCQDGIDSYTCICNPGYMGAICSDQIDECYSSPCLNDGRCIDLVNGYQCNCQPGTSGLNCEINFDDCASNPCMHGVCVDGINRYSCVCSPGFTGQRCNIDIDECASNPCRKGATCINDVNGFRCICPEGPHHPSCYSQVNECLSNPCIHGNCTGGLSGYKCLCDAGWVGVNCEVDKNECLSNPCQNGGTCNNLVNGYRCTCKKGFKGYNCQVNIDECASNPCLNQGTCFDDVSGYTCHCMLPYTGKNCQTVLAPCSPNPCENAAVCKEAPNFESFSCLCAPGWQGKRCTVDVDECISKPCMNNGVCHNTQGSYVCECPPGFSGMDCEEDINDCLANPCQNGGSCVDHVNTFSCQCHPGFIGDKCQTDMNECLSEPCKNGGTCSDYVNSYTCTCPAGFHGVHCENNIDECTESSCFNGGTCVDGINSFSCLCPVGFTGPFCLHDINECSSNPCLNAGTCVDGLGTYRCICPLGYTGKNCQTLVNLCSRSPCKNKGTCVQEKARPHCLCPPGWDGAYCDVLNVSCKAAALQKGVPVEHLCQHSGICINAGNTHHCQCPLGYTGSYCEEQLDECASNPCQHGATCNDFIGGYRCECVPGYQGVNCEYEVDECQNQPCQNGGTCIDLVNHFKCSCPPGTRGLLCEENIDECAGGPHCLNGGQCVDRIGGYTCRCLPGFAGERCEGDINECLSNPCSSEGSLDCVQLKNNYNCICRSAFTGRHCETFLDVCPQKPCLNGGTCAVASNMPDGFICRCPPGFSGARCQSSCGQVKCRRGEQCIHTDSGPRCFCLNPKDCESGCASNPCQHGGTCYPQRQPPHYSCRCPPSFGGSHCELYTAPTSTPPATCQSQYCADKARDGICDEACNSHACQWDGGDCSLTMEDPWANCTSTLRCWEYINNQCDEQCNTAECLFDNFECQRNSKTCKYDKYCADHFKDNHCDQGCNSEECGWDGLDCASDQPENLAEGTLIIVVLLPPEQLLQDSRSFLRALGTLLHTNLRIKQDSQGALMVYPYFGEKSAAMKKQKMTRRSLPEEQEQEQEVIGSKIFLEIDNRQCVQDSDQCFKNTDAAAALLASHAIQGTLSYPLVSVFSELESPRNAQLLYLLAVAVVIILFFILLGVIMAKRKRKHGFLWLPEGFTLRRDSSNHKRREPVGQDAVGLKNLSVQVSEANLIGSGTSEHWVDDEGPQPKKAKAEDEALLSEDDPIDRRPWTQQHLEAADIRHTPSLALTPPQAEQEVDVLDVNVRGPDGCTPLMLASLRGGSSDLSDEDEDAEDSSANIITDLVYQGASLQAQTDRTGEMALHLAARYSRADAAKRLLDAGADANAQDNMGRCPLHAAVAADAQGVFQILIRNRVTDLDARMNDGTTPLILAARLAVEGMVAELINCQADVNAVDDHGKSALHWAAAVNNVEATLLLLKNGANRDMQDNKEETPLFLAAREGSYEAAKILLDHFANRDITDHMDRLPRDVARDRMHHDIVRLLDEYNVTPSPPGTVLTSALSPVLCGPNRSFLSLKHTPMGKKARRPNTKSTMPTSLPNLAKEAKDAKGSRRKKCLNEKVQLSESSVTLSPVDSLESPHTYVSDATSSPMITSPGILQASPTPLLAAAAPAAPVHTQHALSFSNLHDMQPLAPGASTVLPSVSQLLSHHHIAPPGSSSAGSLGRLHPVPVPADWMNRVEMNETQYSEMFGMVLAPAEGAHPGIAAPQSRPPEGKHMSTQREPLPPIVTFQLIPKGSIAQAAGAPQTQSSCPPAVAGPLPSMYQIPEMPRLPSVAFPPTMMPQQEGQVAQTIVPTYHPFPASVGKYPTPPSQHSYASSNAAERTPSHGGHLQGEHPYLTPSPESPDQWSSSSPHSASDWSDVTTSPTPGGGGGGQRGPGTHMSEPPHSNMQVYA</sequence>
<protein>
    <recommendedName>
        <fullName evidence="3">Neurogenic locus notch homolog protein 2</fullName>
        <shortName>Notch 2</shortName>
    </recommendedName>
    <alternativeName>
        <fullName evidence="17">Motch B</fullName>
    </alternativeName>
    <component>
        <recommendedName>
            <fullName>Notch 2 extracellular truncation</fullName>
        </recommendedName>
    </component>
    <component>
        <recommendedName>
            <fullName>Notch 2 intracellular domain</fullName>
        </recommendedName>
    </component>
</protein>
<evidence type="ECO:0000250" key="1"/>
<evidence type="ECO:0000250" key="2">
    <source>
        <dbReference type="UniProtKB" id="Q01705"/>
    </source>
</evidence>
<evidence type="ECO:0000250" key="3">
    <source>
        <dbReference type="UniProtKB" id="Q04721"/>
    </source>
</evidence>
<evidence type="ECO:0000250" key="4">
    <source>
        <dbReference type="UniProtKB" id="Q9QW30"/>
    </source>
</evidence>
<evidence type="ECO:0000255" key="5"/>
<evidence type="ECO:0000255" key="6">
    <source>
        <dbReference type="PROSITE-ProRule" id="PRU00076"/>
    </source>
</evidence>
<evidence type="ECO:0000256" key="7">
    <source>
        <dbReference type="SAM" id="MobiDB-lite"/>
    </source>
</evidence>
<evidence type="ECO:0000269" key="8">
    <source>
    </source>
</evidence>
<evidence type="ECO:0000269" key="9">
    <source>
    </source>
</evidence>
<evidence type="ECO:0000269" key="10">
    <source>
    </source>
</evidence>
<evidence type="ECO:0000269" key="11">
    <source>
    </source>
</evidence>
<evidence type="ECO:0000269" key="12">
    <source>
    </source>
</evidence>
<evidence type="ECO:0000269" key="13">
    <source>
    </source>
</evidence>
<evidence type="ECO:0000269" key="14">
    <source>
    </source>
</evidence>
<evidence type="ECO:0000269" key="15">
    <source>
    </source>
</evidence>
<evidence type="ECO:0000269" key="16">
    <source>
    </source>
</evidence>
<evidence type="ECO:0000303" key="17">
    <source>
    </source>
</evidence>
<evidence type="ECO:0000305" key="18"/>
<evidence type="ECO:0000305" key="19">
    <source>
    </source>
</evidence>
<evidence type="ECO:0000305" key="20">
    <source>
    </source>
</evidence>
<evidence type="ECO:0000312" key="21">
    <source>
        <dbReference type="MGI" id="MGI:97364"/>
    </source>
</evidence>
<evidence type="ECO:0007744" key="22">
    <source>
    </source>
</evidence>
<gene>
    <name evidence="21" type="primary">Notch2</name>
</gene>
<accession>O35516</accession>
<accession>G5E8J0</accession>
<accession>Q06008</accession>
<accession>Q60941</accession>
<reference key="1">
    <citation type="submission" date="1994-07" db="EMBL/GenBank/DDBJ databases">
        <title>Complete amino acid sequence and mutliform transcripts encoded by a single copy of mouse Notch2 gene.</title>
        <authorList>
            <person name="Hamada Y."/>
            <person name="Higuchi M."/>
            <person name="Tsujimoto Y."/>
        </authorList>
    </citation>
    <scope>NUCLEOTIDE SEQUENCE [MRNA]</scope>
    <source>
        <strain>C57BL/6J</strain>
        <tissue>Thymus</tissue>
    </source>
</reference>
<reference key="2">
    <citation type="journal article" date="2009" name="PLoS Biol.">
        <title>Lineage-specific biology revealed by a finished genome assembly of the mouse.</title>
        <authorList>
            <person name="Church D.M."/>
            <person name="Goodstadt L."/>
            <person name="Hillier L.W."/>
            <person name="Zody M.C."/>
            <person name="Goldstein S."/>
            <person name="She X."/>
            <person name="Bult C.J."/>
            <person name="Agarwala R."/>
            <person name="Cherry J.L."/>
            <person name="DiCuccio M."/>
            <person name="Hlavina W."/>
            <person name="Kapustin Y."/>
            <person name="Meric P."/>
            <person name="Maglott D."/>
            <person name="Birtle Z."/>
            <person name="Marques A.C."/>
            <person name="Graves T."/>
            <person name="Zhou S."/>
            <person name="Teague B."/>
            <person name="Potamousis K."/>
            <person name="Churas C."/>
            <person name="Place M."/>
            <person name="Herschleb J."/>
            <person name="Runnheim R."/>
            <person name="Forrest D."/>
            <person name="Amos-Landgraf J."/>
            <person name="Schwartz D.C."/>
            <person name="Cheng Z."/>
            <person name="Lindblad-Toh K."/>
            <person name="Eichler E.E."/>
            <person name="Ponting C.P."/>
        </authorList>
    </citation>
    <scope>NUCLEOTIDE SEQUENCE [LARGE SCALE GENOMIC DNA]</scope>
    <source>
        <strain>C57BL/6J</strain>
    </source>
</reference>
<reference key="3">
    <citation type="submission" date="2005-07" db="EMBL/GenBank/DDBJ databases">
        <authorList>
            <person name="Mural R.J."/>
            <person name="Adams M.D."/>
            <person name="Myers E.W."/>
            <person name="Smith H.O."/>
            <person name="Venter J.C."/>
        </authorList>
    </citation>
    <scope>NUCLEOTIDE SEQUENCE [LARGE SCALE GENOMIC DNA]</scope>
</reference>
<reference key="4">
    <citation type="journal article" date="1993" name="Exp. Cell Res.">
        <title>Motch A and Motch B-two mouse Notch homologues coexpressed in a wide variety of tissues.</title>
        <authorList>
            <person name="Lardelli M."/>
            <person name="Lendahl U."/>
        </authorList>
    </citation>
    <scope>NUCLEOTIDE SEQUENCE [MRNA] OF 318-1520</scope>
    <source>
        <strain>C57BL/6 X CBA</strain>
        <tissue>Embryo</tissue>
    </source>
</reference>
<reference key="5">
    <citation type="journal article" date="1996" name="Proc. Natl. Acad. Sci. U.S.A.">
        <title>Inhibition of granulocytic differentiation by mNotch1.</title>
        <authorList>
            <person name="Milner L.A."/>
            <person name="Bigas A."/>
            <person name="Kopan R."/>
            <person name="Brashem-Stein C."/>
            <person name="Bernstein I.D."/>
            <person name="Martin D.I."/>
        </authorList>
    </citation>
    <scope>NUCLEOTIDE SEQUENCE [MRNA] OF 1768-2156</scope>
</reference>
<reference key="6">
    <citation type="journal article" date="1999" name="Development">
        <title>Mutation in ankyrin repeats of the mouse Notch2 gene induces early embryonic lethality.</title>
        <authorList>
            <person name="Hamada Y."/>
            <person name="Kadokawa Y."/>
            <person name="Okabe M."/>
            <person name="Ikawa M."/>
            <person name="Coleman J.R."/>
            <person name="Tsujimoto Y."/>
        </authorList>
    </citation>
    <scope>FUNCTION</scope>
</reference>
<reference key="7">
    <citation type="journal article" date="1995" name="Brain Res. Mol. Brain Res.">
        <title>Differential expression of Notch1 and Notch2 in developing and adult mouse brain.</title>
        <authorList>
            <person name="Higuchi M."/>
            <person name="Kiyama H."/>
            <person name="Hayakawa T."/>
            <person name="Hamada Y."/>
            <person name="Tsujimoto Y."/>
        </authorList>
    </citation>
    <scope>DEVELOPMENTAL STAGE</scope>
    <scope>ALTERNATIVE SPLICING</scope>
</reference>
<reference key="8">
    <citation type="journal article" date="2001" name="J. Biol. Chem.">
        <title>Murine notch homologs (N1-4) undergo presenilin-dependent proteolysis.</title>
        <authorList>
            <person name="Saxena M.T."/>
            <person name="Schroeter E.H."/>
            <person name="Mumm J.S."/>
            <person name="Kopan R."/>
        </authorList>
    </citation>
    <scope>PROTEOLYTIC PROCESSING</scope>
    <scope>MUTAGENESIS OF MET-1701</scope>
</reference>
<reference key="9">
    <citation type="journal article" date="2001" name="Proc. Natl. Acad. Sci. U.S.A.">
        <title>Conservation of the biochemical mechanisms of signal transduction among mammalian Notch family members.</title>
        <authorList>
            <person name="Mizutani T."/>
            <person name="Taniguchi Y."/>
            <person name="Aoki T."/>
            <person name="Hashimoto N."/>
            <person name="Honjo T."/>
        </authorList>
    </citation>
    <scope>PROTEOLYTIC PROCESSING</scope>
    <scope>MUTAGENESIS OF MET-1701</scope>
</reference>
<reference key="10">
    <citation type="journal article" date="2004" name="Gene">
        <title>Cloning and functional characterization of the murine mastermind-like 1 (Maml1) gene.</title>
        <authorList>
            <person name="Wu L."/>
            <person name="Kobayashi K."/>
            <person name="Sun T."/>
            <person name="Gao P."/>
            <person name="Liu J."/>
            <person name="Nakamura M."/>
            <person name="Weisberg E."/>
            <person name="Mukhopadhyay N.K."/>
            <person name="Griffin J.D."/>
        </authorList>
    </citation>
    <scope>INTERACTION WITH MAML1</scope>
</reference>
<reference key="11">
    <citation type="journal article" date="2007" name="J. Biol. Chem.">
        <title>Asparaginyl hydroxylation of the Notch ankyrin repeat domain by factor inhibiting hypoxia-inducible factor.</title>
        <authorList>
            <person name="Coleman M.L."/>
            <person name="McDonough M.A."/>
            <person name="Hewitson K.S."/>
            <person name="Coles C."/>
            <person name="Mecinovic J."/>
            <person name="Edelmann M."/>
            <person name="Cook K.M."/>
            <person name="Cockman M.E."/>
            <person name="Lancaster D.E."/>
            <person name="Kessler B.M."/>
            <person name="Oldham N.J."/>
            <person name="Ratcliffe P.J."/>
            <person name="Schofield C.J."/>
        </authorList>
    </citation>
    <scope>INTERACTION WITH HIF1AN</scope>
</reference>
<reference key="12">
    <citation type="journal article" date="2008" name="Mol. Cell. Biol.">
        <title>The association of Notch2 and NF-kappaB accelerates RANKL-induced osteoclastogenesis.</title>
        <authorList>
            <person name="Fukushima H."/>
            <person name="Nakao A."/>
            <person name="Okamoto F."/>
            <person name="Shin M."/>
            <person name="Kajiya H."/>
            <person name="Sakano S."/>
            <person name="Bigas A."/>
            <person name="Jimi E."/>
            <person name="Okabe K."/>
        </authorList>
    </citation>
    <scope>FUNCTION AS POSITIVE REGULATOR OF OSTEOCLASTOGENESIS</scope>
    <scope>INTERACTION WITH RELA</scope>
</reference>
<reference key="13">
    <citation type="journal article" date="2008" name="Proc. Natl. Acad. Sci. U.S.A.">
        <title>Interaction with factor inhibiting HIF-1 defines an additional mode of cross-coupling between the Notch and hypoxia signaling pathways.</title>
        <authorList>
            <person name="Zheng X."/>
            <person name="Linke S."/>
            <person name="Dias J.M."/>
            <person name="Zheng X."/>
            <person name="Gradin K."/>
            <person name="Wallis T.P."/>
            <person name="Hamilton B.R."/>
            <person name="Gustafsson M."/>
            <person name="Ruas J.L."/>
            <person name="Wilkins S."/>
            <person name="Bilton R.L."/>
            <person name="Brismar K."/>
            <person name="Whitelaw M.L."/>
            <person name="Pereira T."/>
            <person name="Gorman J.J."/>
            <person name="Ericson J."/>
            <person name="Peet D.J."/>
            <person name="Lendahl U."/>
            <person name="Poellinger L."/>
        </authorList>
    </citation>
    <scope>HYDROXYLATION BY HIF1AN</scope>
</reference>
<reference key="14">
    <citation type="journal article" date="2009" name="Immunity">
        <title>The phagosomal proteome in interferon-gamma-activated macrophages.</title>
        <authorList>
            <person name="Trost M."/>
            <person name="English L."/>
            <person name="Lemieux S."/>
            <person name="Courcelles M."/>
            <person name="Desjardins M."/>
            <person name="Thibault P."/>
        </authorList>
    </citation>
    <scope>PHOSPHORYLATION [LARGE SCALE ANALYSIS] AT SER-1780; SER-1843 AND SER-1846</scope>
    <scope>IDENTIFICATION BY MASS SPECTROMETRY [LARGE SCALE ANALYSIS]</scope>
</reference>
<reference key="15">
    <citation type="journal article" date="2010" name="Cell">
        <title>A tissue-specific atlas of mouse protein phosphorylation and expression.</title>
        <authorList>
            <person name="Huttlin E.L."/>
            <person name="Jedrychowski M.P."/>
            <person name="Elias J.E."/>
            <person name="Goswami T."/>
            <person name="Rad R."/>
            <person name="Beausoleil S.A."/>
            <person name="Villen J."/>
            <person name="Haas W."/>
            <person name="Sowa M.E."/>
            <person name="Gygi S.P."/>
        </authorList>
    </citation>
    <scope>IDENTIFICATION BY MASS SPECTROMETRY [LARGE SCALE ANALYSIS]</scope>
    <source>
        <tissue>Kidney</tissue>
        <tissue>Liver</tissue>
    </source>
</reference>
<reference key="16">
    <citation type="journal article" date="2011" name="Proc. Natl. Acad. Sci. U.S.A.">
        <title>Rumi functions as both a protein O-glucosyltransferase and a protein O-xylosyltransferase.</title>
        <authorList>
            <person name="Takeuchi H."/>
            <person name="Fernandez-Valdivia R.C."/>
            <person name="Caswell D.S."/>
            <person name="Nita-Lazar A."/>
            <person name="Rana N.A."/>
            <person name="Garner T.P."/>
            <person name="Weldeghiorghis T.K."/>
            <person name="Macnaughtan M.A."/>
            <person name="Jafar-Nejad H."/>
            <person name="Haltiwanger R.S."/>
        </authorList>
    </citation>
    <scope>GLYCOSYLATION AT SER-613</scope>
    <scope>MUTAGENESIS OF SER-614</scope>
</reference>